<comment type="function">
    <text evidence="1">Required for maturation of 30S ribosomal subunits.</text>
</comment>
<comment type="subcellular location">
    <subcellularLocation>
        <location evidence="1">Cytoplasm</location>
    </subcellularLocation>
</comment>
<comment type="similarity">
    <text evidence="1">Belongs to the RimP family.</text>
</comment>
<dbReference type="EMBL" id="AE017226">
    <property type="protein sequence ID" value="AAS11597.1"/>
    <property type="molecule type" value="Genomic_DNA"/>
</dbReference>
<dbReference type="RefSeq" id="NP_971716.1">
    <property type="nucleotide sequence ID" value="NC_002967.9"/>
</dbReference>
<dbReference type="RefSeq" id="WP_002670663.1">
    <property type="nucleotide sequence ID" value="NC_002967.9"/>
</dbReference>
<dbReference type="SMR" id="Q73NP4"/>
<dbReference type="STRING" id="243275.TDE_1108"/>
<dbReference type="PaxDb" id="243275-TDE_1108"/>
<dbReference type="GeneID" id="2740238"/>
<dbReference type="KEGG" id="tde:TDE_1108"/>
<dbReference type="PATRIC" id="fig|243275.7.peg.1067"/>
<dbReference type="eggNOG" id="COG0779">
    <property type="taxonomic scope" value="Bacteria"/>
</dbReference>
<dbReference type="HOGENOM" id="CLU_070525_4_1_12"/>
<dbReference type="OrthoDB" id="361904at2"/>
<dbReference type="Proteomes" id="UP000008212">
    <property type="component" value="Chromosome"/>
</dbReference>
<dbReference type="GO" id="GO:0005829">
    <property type="term" value="C:cytosol"/>
    <property type="evidence" value="ECO:0007669"/>
    <property type="project" value="TreeGrafter"/>
</dbReference>
<dbReference type="GO" id="GO:0000028">
    <property type="term" value="P:ribosomal small subunit assembly"/>
    <property type="evidence" value="ECO:0007669"/>
    <property type="project" value="TreeGrafter"/>
</dbReference>
<dbReference type="GO" id="GO:0006412">
    <property type="term" value="P:translation"/>
    <property type="evidence" value="ECO:0007669"/>
    <property type="project" value="TreeGrafter"/>
</dbReference>
<dbReference type="Gene3D" id="3.30.300.70">
    <property type="entry name" value="RimP-like superfamily, N-terminal"/>
    <property type="match status" value="1"/>
</dbReference>
<dbReference type="HAMAP" id="MF_01077">
    <property type="entry name" value="RimP"/>
    <property type="match status" value="1"/>
</dbReference>
<dbReference type="InterPro" id="IPR003728">
    <property type="entry name" value="Ribosome_maturation_RimP"/>
</dbReference>
<dbReference type="InterPro" id="IPR028998">
    <property type="entry name" value="RimP_C"/>
</dbReference>
<dbReference type="InterPro" id="IPR036847">
    <property type="entry name" value="RimP_C_sf"/>
</dbReference>
<dbReference type="InterPro" id="IPR028989">
    <property type="entry name" value="RimP_N"/>
</dbReference>
<dbReference type="InterPro" id="IPR035956">
    <property type="entry name" value="RimP_N_sf"/>
</dbReference>
<dbReference type="NCBIfam" id="NF011230">
    <property type="entry name" value="PRK14637.1"/>
    <property type="match status" value="1"/>
</dbReference>
<dbReference type="PANTHER" id="PTHR33867">
    <property type="entry name" value="RIBOSOME MATURATION FACTOR RIMP"/>
    <property type="match status" value="1"/>
</dbReference>
<dbReference type="PANTHER" id="PTHR33867:SF1">
    <property type="entry name" value="RIBOSOME MATURATION FACTOR RIMP"/>
    <property type="match status" value="1"/>
</dbReference>
<dbReference type="Pfam" id="PF17384">
    <property type="entry name" value="DUF150_C"/>
    <property type="match status" value="1"/>
</dbReference>
<dbReference type="Pfam" id="PF02576">
    <property type="entry name" value="RimP_N"/>
    <property type="match status" value="1"/>
</dbReference>
<dbReference type="SUPFAM" id="SSF74942">
    <property type="entry name" value="YhbC-like, C-terminal domain"/>
    <property type="match status" value="1"/>
</dbReference>
<dbReference type="SUPFAM" id="SSF75420">
    <property type="entry name" value="YhbC-like, N-terminal domain"/>
    <property type="match status" value="1"/>
</dbReference>
<gene>
    <name evidence="1" type="primary">rimP</name>
    <name type="ordered locus">TDE_1108</name>
</gene>
<protein>
    <recommendedName>
        <fullName evidence="1">Ribosome maturation factor RimP</fullName>
    </recommendedName>
</protein>
<accession>Q73NP4</accession>
<proteinExistence type="inferred from homology"/>
<keyword id="KW-0963">Cytoplasm</keyword>
<keyword id="KW-1185">Reference proteome</keyword>
<keyword id="KW-0690">Ribosome biogenesis</keyword>
<sequence>MEFIQKKDIPYFSECEPLVEGLGFKLVDLNVLHKKDVWQVKAVIKSEKGVGIKDCTSVHRTLQPRIEALIGSQDVTMEVSSPGINRLVKRAVEFYAFVGEEAQIWDNSITDWRHGIIKEVNSEGLVLNSDNQDIQIPYQDIKKARCNL</sequence>
<name>RIMP_TREDE</name>
<feature type="chain" id="PRO_0000181947" description="Ribosome maturation factor RimP">
    <location>
        <begin position="1"/>
        <end position="148"/>
    </location>
</feature>
<evidence type="ECO:0000255" key="1">
    <source>
        <dbReference type="HAMAP-Rule" id="MF_01077"/>
    </source>
</evidence>
<reference key="1">
    <citation type="journal article" date="2004" name="Proc. Natl. Acad. Sci. U.S.A.">
        <title>Comparison of the genome of the oral pathogen Treponema denticola with other spirochete genomes.</title>
        <authorList>
            <person name="Seshadri R."/>
            <person name="Myers G.S.A."/>
            <person name="Tettelin H."/>
            <person name="Eisen J.A."/>
            <person name="Heidelberg J.F."/>
            <person name="Dodson R.J."/>
            <person name="Davidsen T.M."/>
            <person name="DeBoy R.T."/>
            <person name="Fouts D.E."/>
            <person name="Haft D.H."/>
            <person name="Selengut J."/>
            <person name="Ren Q."/>
            <person name="Brinkac L.M."/>
            <person name="Madupu R."/>
            <person name="Kolonay J.F."/>
            <person name="Durkin S.A."/>
            <person name="Daugherty S.C."/>
            <person name="Shetty J."/>
            <person name="Shvartsbeyn A."/>
            <person name="Gebregeorgis E."/>
            <person name="Geer K."/>
            <person name="Tsegaye G."/>
            <person name="Malek J.A."/>
            <person name="Ayodeji B."/>
            <person name="Shatsman S."/>
            <person name="McLeod M.P."/>
            <person name="Smajs D."/>
            <person name="Howell J.K."/>
            <person name="Pal S."/>
            <person name="Amin A."/>
            <person name="Vashisth P."/>
            <person name="McNeill T.Z."/>
            <person name="Xiang Q."/>
            <person name="Sodergren E."/>
            <person name="Baca E."/>
            <person name="Weinstock G.M."/>
            <person name="Norris S.J."/>
            <person name="Fraser C.M."/>
            <person name="Paulsen I.T."/>
        </authorList>
    </citation>
    <scope>NUCLEOTIDE SEQUENCE [LARGE SCALE GENOMIC DNA]</scope>
    <source>
        <strain>ATCC 35405 / DSM 14222 / CIP 103919 / JCM 8153 / KCTC 15104</strain>
    </source>
</reference>
<organism>
    <name type="scientific">Treponema denticola (strain ATCC 35405 / DSM 14222 / CIP 103919 / JCM 8153 / KCTC 15104)</name>
    <dbReference type="NCBI Taxonomy" id="243275"/>
    <lineage>
        <taxon>Bacteria</taxon>
        <taxon>Pseudomonadati</taxon>
        <taxon>Spirochaetota</taxon>
        <taxon>Spirochaetia</taxon>
        <taxon>Spirochaetales</taxon>
        <taxon>Treponemataceae</taxon>
        <taxon>Treponema</taxon>
    </lineage>
</organism>